<evidence type="ECO:0000250" key="1"/>
<evidence type="ECO:0000255" key="2"/>
<reference key="1">
    <citation type="journal article" date="1990" name="J. Gen. Virol.">
        <title>Molecular cloning and sequencing of an Australian isolate of proviral bovine leukaemia virus DNA: comparison with other isolates.</title>
        <authorList>
            <person name="Coulston J."/>
            <person name="Naif H."/>
            <person name="Brandon R."/>
            <person name="Kumar S."/>
            <person name="Khan S."/>
            <person name="Daniel R.C.W."/>
            <person name="Lavin M.F."/>
        </authorList>
    </citation>
    <scope>NUCLEOTIDE SEQUENCE [GENOMIC DNA]</scope>
</reference>
<name>ENV_BLVAU</name>
<dbReference type="EMBL" id="D00647">
    <property type="protein sequence ID" value="BAA00545.1"/>
    <property type="molecule type" value="Genomic_DNA"/>
</dbReference>
<dbReference type="PIR" id="JQ0556">
    <property type="entry name" value="VCLJGA"/>
</dbReference>
<dbReference type="SMR" id="P25057"/>
<dbReference type="GlyCosmos" id="P25057">
    <property type="glycosylation" value="9 sites, No reported glycans"/>
</dbReference>
<dbReference type="GO" id="GO:0020002">
    <property type="term" value="C:host cell plasma membrane"/>
    <property type="evidence" value="ECO:0007669"/>
    <property type="project" value="UniProtKB-SubCell"/>
</dbReference>
<dbReference type="GO" id="GO:0016020">
    <property type="term" value="C:membrane"/>
    <property type="evidence" value="ECO:0007669"/>
    <property type="project" value="UniProtKB-KW"/>
</dbReference>
<dbReference type="GO" id="GO:0019031">
    <property type="term" value="C:viral envelope"/>
    <property type="evidence" value="ECO:0007669"/>
    <property type="project" value="UniProtKB-KW"/>
</dbReference>
<dbReference type="GO" id="GO:0055036">
    <property type="term" value="C:virion membrane"/>
    <property type="evidence" value="ECO:0007669"/>
    <property type="project" value="UniProtKB-SubCell"/>
</dbReference>
<dbReference type="GO" id="GO:0019064">
    <property type="term" value="P:fusion of virus membrane with host plasma membrane"/>
    <property type="evidence" value="ECO:0007669"/>
    <property type="project" value="UniProtKB-KW"/>
</dbReference>
<dbReference type="GO" id="GO:0046718">
    <property type="term" value="P:symbiont entry into host cell"/>
    <property type="evidence" value="ECO:0007669"/>
    <property type="project" value="UniProtKB-KW"/>
</dbReference>
<dbReference type="GO" id="GO:0019062">
    <property type="term" value="P:virion attachment to host cell"/>
    <property type="evidence" value="ECO:0007669"/>
    <property type="project" value="UniProtKB-KW"/>
</dbReference>
<dbReference type="Gene3D" id="1.10.287.210">
    <property type="match status" value="1"/>
</dbReference>
<dbReference type="InterPro" id="IPR018154">
    <property type="entry name" value="TLV/ENV_coat_polyprotein"/>
</dbReference>
<dbReference type="PANTHER" id="PTHR10424">
    <property type="entry name" value="VIRAL ENVELOPE PROTEIN"/>
    <property type="match status" value="1"/>
</dbReference>
<dbReference type="Pfam" id="PF00429">
    <property type="entry name" value="TLV_coat"/>
    <property type="match status" value="1"/>
</dbReference>
<dbReference type="SUPFAM" id="SSF58069">
    <property type="entry name" value="Virus ectodomain"/>
    <property type="match status" value="1"/>
</dbReference>
<accession>P25057</accession>
<gene>
    <name type="primary">env</name>
</gene>
<organism>
    <name type="scientific">Bovine leukemia virus (isolate Australian)</name>
    <name type="common">BLV</name>
    <dbReference type="NCBI Taxonomy" id="11903"/>
    <lineage>
        <taxon>Viruses</taxon>
        <taxon>Riboviria</taxon>
        <taxon>Pararnavirae</taxon>
        <taxon>Artverviricota</taxon>
        <taxon>Revtraviricetes</taxon>
        <taxon>Ortervirales</taxon>
        <taxon>Retroviridae</taxon>
        <taxon>Orthoretrovirinae</taxon>
        <taxon>Deltaretrovirus</taxon>
        <taxon>Bovine leukemia virus</taxon>
    </lineage>
</organism>
<keyword id="KW-0165">Cleavage on pair of basic residues</keyword>
<keyword id="KW-0175">Coiled coil</keyword>
<keyword id="KW-1015">Disulfide bond</keyword>
<keyword id="KW-1169">Fusion of virus membrane with host cell membrane</keyword>
<keyword id="KW-1168">Fusion of virus membrane with host membrane</keyword>
<keyword id="KW-0325">Glycoprotein</keyword>
<keyword id="KW-1032">Host cell membrane</keyword>
<keyword id="KW-1043">Host membrane</keyword>
<keyword id="KW-0945">Host-virus interaction</keyword>
<keyword id="KW-0449">Lipoprotein</keyword>
<keyword id="KW-0472">Membrane</keyword>
<keyword id="KW-0564">Palmitate</keyword>
<keyword id="KW-0732">Signal</keyword>
<keyword id="KW-0812">Transmembrane</keyword>
<keyword id="KW-1133">Transmembrane helix</keyword>
<keyword id="KW-1161">Viral attachment to host cell</keyword>
<keyword id="KW-0261">Viral envelope protein</keyword>
<keyword id="KW-1162">Viral penetration into host cytoplasm</keyword>
<keyword id="KW-0946">Virion</keyword>
<keyword id="KW-1160">Virus entry into host cell</keyword>
<feature type="signal peptide" evidence="2">
    <location>
        <begin position="1"/>
        <end position="33"/>
    </location>
</feature>
<feature type="chain" id="PRO_0000239551" description="Envelope glycoprotein">
    <location>
        <begin position="34"/>
        <end position="515"/>
    </location>
</feature>
<feature type="chain" id="PRO_0000040689" description="Surface protein" evidence="1">
    <location>
        <begin position="34"/>
        <end position="301"/>
    </location>
</feature>
<feature type="chain" id="PRO_0000040690" description="Transmembrane protein" evidence="1">
    <location>
        <begin position="302"/>
        <end position="515"/>
    </location>
</feature>
<feature type="topological domain" description="Extracellular" evidence="2">
    <location>
        <begin position="34"/>
        <end position="435"/>
    </location>
</feature>
<feature type="transmembrane region" description="Helical" evidence="2">
    <location>
        <begin position="436"/>
        <end position="456"/>
    </location>
</feature>
<feature type="topological domain" description="Cytoplasmic" evidence="2">
    <location>
        <begin position="457"/>
        <end position="515"/>
    </location>
</feature>
<feature type="region of interest" description="Fusion peptide" evidence="2">
    <location>
        <begin position="304"/>
        <end position="324"/>
    </location>
</feature>
<feature type="region of interest" description="Immunosuppression" evidence="1">
    <location>
        <begin position="365"/>
        <end position="381"/>
    </location>
</feature>
<feature type="coiled-coil region" evidence="2">
    <location>
        <begin position="330"/>
        <end position="376"/>
    </location>
</feature>
<feature type="coiled-coil region" evidence="2">
    <location>
        <begin position="388"/>
        <end position="420"/>
    </location>
</feature>
<feature type="short sequence motif" description="CXXC">
    <location>
        <begin position="212"/>
        <end position="215"/>
    </location>
</feature>
<feature type="short sequence motif" description="CX6CC">
    <location>
        <begin position="384"/>
        <end position="392"/>
    </location>
</feature>
<feature type="site" description="Cleavage; by host" evidence="1">
    <location>
        <begin position="301"/>
        <end position="302"/>
    </location>
</feature>
<feature type="lipid moiety-binding region" description="S-palmitoyl cysteine; by host" evidence="1">
    <location>
        <position position="455"/>
    </location>
</feature>
<feature type="glycosylation site" description="N-linked (GlcNAc...) asparagine; by host" evidence="2">
    <location>
        <position position="129"/>
    </location>
</feature>
<feature type="glycosylation site" description="N-linked (GlcNAc...) asparagine; by host" evidence="2">
    <location>
        <position position="203"/>
    </location>
</feature>
<feature type="glycosylation site" description="N-linked (GlcNAc...) asparagine; by host" evidence="2">
    <location>
        <position position="230"/>
    </location>
</feature>
<feature type="glycosylation site" description="N-linked (GlcNAc...) asparagine; by host" evidence="2">
    <location>
        <position position="251"/>
    </location>
</feature>
<feature type="glycosylation site" description="N-linked (GlcNAc...) asparagine; by host" evidence="2">
    <location>
        <position position="256"/>
    </location>
</feature>
<feature type="glycosylation site" description="N-linked (GlcNAc...) asparagine; by host" evidence="2">
    <location>
        <position position="271"/>
    </location>
</feature>
<feature type="glycosylation site" description="N-linked (GlcNAc...) asparagine; by host" evidence="2">
    <location>
        <position position="287"/>
    </location>
</feature>
<feature type="glycosylation site" description="N-linked (GlcNAc...) asparagine; by host" evidence="2">
    <location>
        <position position="351"/>
    </location>
</feature>
<feature type="glycosylation site" description="N-linked (GlcNAc...) asparagine; by host" evidence="2">
    <location>
        <position position="398"/>
    </location>
</feature>
<feature type="disulfide bond" description="Interchain (between SU and TM chains, or C-215 with C-392); in linked form" evidence="1">
    <location>
        <begin position="212"/>
        <end position="392"/>
    </location>
</feature>
<feature type="disulfide bond" evidence="1">
    <location>
        <begin position="212"/>
        <end position="215"/>
    </location>
</feature>
<feature type="disulfide bond" evidence="1">
    <location>
        <begin position="384"/>
        <end position="391"/>
    </location>
</feature>
<proteinExistence type="inferred from homology"/>
<protein>
    <recommendedName>
        <fullName>Envelope glycoprotein</fullName>
    </recommendedName>
    <alternativeName>
        <fullName>Env polyprotein</fullName>
    </alternativeName>
    <component>
        <recommendedName>
            <fullName>Surface protein</fullName>
            <shortName>SU</shortName>
        </recommendedName>
        <alternativeName>
            <fullName>Glycoprotein 51</fullName>
            <shortName>gp51</shortName>
        </alternativeName>
    </component>
    <component>
        <recommendedName>
            <fullName>Transmembrane protein</fullName>
            <shortName>TM</shortName>
        </recommendedName>
        <alternativeName>
            <fullName>Glycoprotein 30</fullName>
            <shortName>gp30</shortName>
        </alternativeName>
    </component>
</protein>
<organismHost>
    <name type="scientific">Bos taurus</name>
    <name type="common">Bovine</name>
    <dbReference type="NCBI Taxonomy" id="9913"/>
</organismHost>
<sequence>MPKERRSRRRPEPIIRWVSLTLTLLALCQPIQTWRCSLSLGNQQWMTAYNQEAKFSISIDQILEAHNQSPFCAKSPRYTLDSVNGYPKIYWPPPQGRRRFGARAMVTYDCEPRCPYVGADRFDCPHWDNASQADQGSFYVNHQILFLHLKQCHGIFTLTWEIWGYDPLITFSLHKIPDPPQPDFPQLNSDWVPSVRSWALLLNQTARAFPDCAICWEPSPPWAPEILVYNKTISSSGPGLALPDAQIFWVNTSSFNTTQGWHHPSQRLLFNVSQGNALLLPPISLVNLSTASSAPPTRVRRSPVAALTLGLALSVGLTGIKVAVSALSHQRLTSLIHVLEQDQQRLITAINQTHYNLLNVASVVAQNRRGLDWLYIRLGFQSLCPTINEPCCFLRIQNDSIIRLGDLQPLSQRVSTDWQWPWNWDLGLTAWVRETIHSVLSLFLLALLLLFLAPCLIKCLTSRLSKLLRQAPHFPEISFPPKPDSDYQALLPSAPEIYSHLSPTKPDYINLRPCP</sequence>
<comment type="function">
    <text evidence="1">The surface protein (SU) attaches the virus to the host cell by binding to its receptor. This interaction triggers the refolding of the transmembrane protein (TM) and is thought to activate its fusogenic potential by unmasking its fusion peptide. Fusion occurs at the host cell plasma membrane (By similarity).</text>
</comment>
<comment type="function">
    <text evidence="1">The transmembrane protein (TM) acts as a class I viral fusion protein. Under the current model, the protein has at least 3 conformational states: pre-fusion native state, pre-hairpin intermediate state, and post-fusion hairpin state. During viral and target cell membrane fusion, the coiled coil regions (heptad repeats) assume a trimer-of-hairpins structure, positioning the fusion peptide in close proximity to the C-terminal region of the ectodomain. The formation of this structure appears to drive apposition and subsequent fusion of viral and target cell membranes. Membranes fusion leads to delivery of the nucleocapsid into the cytoplasm (By similarity).</text>
</comment>
<comment type="subunit">
    <text evidence="1">The mature envelope protein (Env) consists of a trimer of SU-TM heterodimers attached by a labile interchain disulfide bond.</text>
</comment>
<comment type="subcellular location">
    <molecule>Transmembrane protein</molecule>
    <subcellularLocation>
        <location evidence="1">Virion membrane</location>
        <topology evidence="1">Single-pass type I membrane protein</topology>
    </subcellularLocation>
    <subcellularLocation>
        <location evidence="1">Host cell membrane</location>
        <topology evidence="1">Single-pass type I membrane protein</topology>
    </subcellularLocation>
    <text evidence="1">It is probably concentrated at the site of budding and incorporated into the virions possibly by contacts between the cytoplasmic tail of Env and the N-terminus of Gag.</text>
</comment>
<comment type="subcellular location">
    <molecule>Surface protein</molecule>
    <subcellularLocation>
        <location evidence="1">Virion membrane</location>
        <topology evidence="1">Peripheral membrane protein</topology>
    </subcellularLocation>
    <subcellularLocation>
        <location evidence="1">Host cell membrane</location>
        <topology evidence="1">Peripheral membrane protein</topology>
    </subcellularLocation>
    <text evidence="1">The surface protein is not anchored to the viral envelope, but associates with the extravirion surface through its binding to TM. It is probably concentrated at the site of budding and incorporated into the virions possibly by contacts between the cytoplasmic tail of Env and the N-terminus of Gag (By similarity).</text>
</comment>
<comment type="domain">
    <text evidence="1">The 17 amino acids long immunosuppressive region is present in many retroviral envelope proteins. Synthetic peptides derived from this relatively conserved sequence inhibit immune function in vitro and in vivo (By similarity).</text>
</comment>
<comment type="PTM">
    <text evidence="1">Specific enzymatic cleavages in vivo yield mature proteins. Envelope glycoproteins are synthesized as an inactive precursor that is N-glycosylated and processed likely by host cell furin or by a furin-like protease in the Golgi to yield the mature SU and TM proteins. The cleavage site between SU and TM requires the minimal sequence [KR]-X-[KR]-R (By similarity).</text>
</comment>
<comment type="PTM">
    <text evidence="1">The CXXC motif is highly conserved across a broad range of retroviral envelope proteins. It is thought to participate in the formation of a labile disulfide bond possibly with the CX6CC motif present in the transmembrane protein. Isomerization of the intersubunit disulfide bond to an SU intrachain disulfide bond is thought to occur upon receptor recognition in order to allow membrane fusion (By similarity).</text>
</comment>
<comment type="PTM">
    <text evidence="1">The transmembrane protein is palmitoylated.</text>
</comment>